<reference key="1">
    <citation type="submission" date="2009-03" db="EMBL/GenBank/DDBJ databases">
        <title>Complete genome sequence of Edwardsiella ictaluri 93-146.</title>
        <authorList>
            <person name="Williams M.L."/>
            <person name="Gillaspy A.F."/>
            <person name="Dyer D.W."/>
            <person name="Thune R.L."/>
            <person name="Waldbieser G.C."/>
            <person name="Schuster S.C."/>
            <person name="Gipson J."/>
            <person name="Zaitshik J."/>
            <person name="Landry C."/>
            <person name="Lawrence M.L."/>
        </authorList>
    </citation>
    <scope>NUCLEOTIDE SEQUENCE [LARGE SCALE GENOMIC DNA]</scope>
    <source>
        <strain>93-146</strain>
    </source>
</reference>
<gene>
    <name evidence="1" type="primary">gcvH</name>
    <name type="ordered locus">NT01EI_3352</name>
</gene>
<dbReference type="EMBL" id="CP001600">
    <property type="protein sequence ID" value="ACR70490.1"/>
    <property type="molecule type" value="Genomic_DNA"/>
</dbReference>
<dbReference type="RefSeq" id="WP_015872564.1">
    <property type="nucleotide sequence ID" value="NZ_CP169062.1"/>
</dbReference>
<dbReference type="SMR" id="C5BAT1"/>
<dbReference type="STRING" id="67780.B6E78_08445"/>
<dbReference type="GeneID" id="69540207"/>
<dbReference type="KEGG" id="eic:NT01EI_3352"/>
<dbReference type="PATRIC" id="fig|634503.3.peg.2979"/>
<dbReference type="HOGENOM" id="CLU_097408_2_1_6"/>
<dbReference type="OrthoDB" id="9796712at2"/>
<dbReference type="Proteomes" id="UP000001485">
    <property type="component" value="Chromosome"/>
</dbReference>
<dbReference type="GO" id="GO:0005829">
    <property type="term" value="C:cytosol"/>
    <property type="evidence" value="ECO:0007669"/>
    <property type="project" value="TreeGrafter"/>
</dbReference>
<dbReference type="GO" id="GO:0005960">
    <property type="term" value="C:glycine cleavage complex"/>
    <property type="evidence" value="ECO:0007669"/>
    <property type="project" value="InterPro"/>
</dbReference>
<dbReference type="GO" id="GO:0019464">
    <property type="term" value="P:glycine decarboxylation via glycine cleavage system"/>
    <property type="evidence" value="ECO:0007669"/>
    <property type="project" value="UniProtKB-UniRule"/>
</dbReference>
<dbReference type="CDD" id="cd06848">
    <property type="entry name" value="GCS_H"/>
    <property type="match status" value="1"/>
</dbReference>
<dbReference type="Gene3D" id="2.40.50.100">
    <property type="match status" value="1"/>
</dbReference>
<dbReference type="HAMAP" id="MF_00272">
    <property type="entry name" value="GcvH"/>
    <property type="match status" value="1"/>
</dbReference>
<dbReference type="InterPro" id="IPR003016">
    <property type="entry name" value="2-oxoA_DH_lipoyl-BS"/>
</dbReference>
<dbReference type="InterPro" id="IPR000089">
    <property type="entry name" value="Biotin_lipoyl"/>
</dbReference>
<dbReference type="InterPro" id="IPR002930">
    <property type="entry name" value="GCV_H"/>
</dbReference>
<dbReference type="InterPro" id="IPR033753">
    <property type="entry name" value="GCV_H/Fam206"/>
</dbReference>
<dbReference type="InterPro" id="IPR017453">
    <property type="entry name" value="GCV_H_sub"/>
</dbReference>
<dbReference type="InterPro" id="IPR011053">
    <property type="entry name" value="Single_hybrid_motif"/>
</dbReference>
<dbReference type="NCBIfam" id="TIGR00527">
    <property type="entry name" value="gcvH"/>
    <property type="match status" value="1"/>
</dbReference>
<dbReference type="NCBIfam" id="NF002270">
    <property type="entry name" value="PRK01202.1"/>
    <property type="match status" value="1"/>
</dbReference>
<dbReference type="PANTHER" id="PTHR11715">
    <property type="entry name" value="GLYCINE CLEAVAGE SYSTEM H PROTEIN"/>
    <property type="match status" value="1"/>
</dbReference>
<dbReference type="PANTHER" id="PTHR11715:SF3">
    <property type="entry name" value="GLYCINE CLEAVAGE SYSTEM H PROTEIN-RELATED"/>
    <property type="match status" value="1"/>
</dbReference>
<dbReference type="Pfam" id="PF01597">
    <property type="entry name" value="GCV_H"/>
    <property type="match status" value="1"/>
</dbReference>
<dbReference type="SUPFAM" id="SSF51230">
    <property type="entry name" value="Single hybrid motif"/>
    <property type="match status" value="1"/>
</dbReference>
<dbReference type="PROSITE" id="PS50968">
    <property type="entry name" value="BIOTINYL_LIPOYL"/>
    <property type="match status" value="1"/>
</dbReference>
<dbReference type="PROSITE" id="PS00189">
    <property type="entry name" value="LIPOYL"/>
    <property type="match status" value="1"/>
</dbReference>
<proteinExistence type="inferred from homology"/>
<accession>C5BAT1</accession>
<protein>
    <recommendedName>
        <fullName evidence="1">Glycine cleavage system H protein</fullName>
    </recommendedName>
</protein>
<sequence>MSNVPTELKYTASHEWVRAEENGVFCVGITDHAQSLLGDMVFVDLPEVGAHIDTGAECAVAESVKAASDIYSPLAGEIVAINGSLEEAPEQVNAAPYDEGWLFRIRADDPAEFAALLSAEGYLAALDE</sequence>
<organism>
    <name type="scientific">Edwardsiella ictaluri (strain 93-146)</name>
    <dbReference type="NCBI Taxonomy" id="634503"/>
    <lineage>
        <taxon>Bacteria</taxon>
        <taxon>Pseudomonadati</taxon>
        <taxon>Pseudomonadota</taxon>
        <taxon>Gammaproteobacteria</taxon>
        <taxon>Enterobacterales</taxon>
        <taxon>Hafniaceae</taxon>
        <taxon>Edwardsiella</taxon>
    </lineage>
</organism>
<evidence type="ECO:0000255" key="1">
    <source>
        <dbReference type="HAMAP-Rule" id="MF_00272"/>
    </source>
</evidence>
<evidence type="ECO:0000255" key="2">
    <source>
        <dbReference type="PROSITE-ProRule" id="PRU01066"/>
    </source>
</evidence>
<name>GCSH_EDWI9</name>
<keyword id="KW-0450">Lipoyl</keyword>
<feature type="chain" id="PRO_1000204746" description="Glycine cleavage system H protein">
    <location>
        <begin position="1"/>
        <end position="128"/>
    </location>
</feature>
<feature type="domain" description="Lipoyl-binding" evidence="2">
    <location>
        <begin position="24"/>
        <end position="106"/>
    </location>
</feature>
<feature type="modified residue" description="N6-lipoyllysine" evidence="1">
    <location>
        <position position="65"/>
    </location>
</feature>
<comment type="function">
    <text evidence="1">The glycine cleavage system catalyzes the degradation of glycine. The H protein shuttles the methylamine group of glycine from the P protein to the T protein.</text>
</comment>
<comment type="cofactor">
    <cofactor evidence="1">
        <name>(R)-lipoate</name>
        <dbReference type="ChEBI" id="CHEBI:83088"/>
    </cofactor>
    <text evidence="1">Binds 1 lipoyl cofactor covalently.</text>
</comment>
<comment type="subunit">
    <text evidence="1">The glycine cleavage system is composed of four proteins: P, T, L and H.</text>
</comment>
<comment type="similarity">
    <text evidence="1">Belongs to the GcvH family.</text>
</comment>